<name>NO20_SOYBN</name>
<protein>
    <recommendedName>
        <fullName>Nodulin-20</fullName>
        <shortName>N-20</shortName>
    </recommendedName>
</protein>
<feature type="signal peptide">
    <location>
        <begin position="1"/>
        <end position="17"/>
    </location>
</feature>
<feature type="chain" id="PRO_0000019785" description="Nodulin-20">
    <location>
        <begin position="18"/>
        <end position="185"/>
    </location>
</feature>
<feature type="sequence variant" description="In truncated form N-20T.">
    <location>
        <begin position="76"/>
        <end position="185"/>
    </location>
</feature>
<accession>P08960</accession>
<proteinExistence type="evidence at transcript level"/>
<dbReference type="EMBL" id="X05020">
    <property type="protein sequence ID" value="CAA28677.1"/>
    <property type="molecule type" value="Genomic_DNA"/>
</dbReference>
<dbReference type="EMBL" id="X60159">
    <property type="protein sequence ID" value="CAA42728.1"/>
    <property type="molecule type" value="Genomic_DNA"/>
</dbReference>
<dbReference type="PIR" id="B26669">
    <property type="entry name" value="B26669"/>
</dbReference>
<dbReference type="RefSeq" id="NP_001237453.1">
    <property type="nucleotide sequence ID" value="NM_001250524.1"/>
</dbReference>
<dbReference type="STRING" id="3847.P08960"/>
<dbReference type="InParanoid" id="P08960"/>
<dbReference type="Proteomes" id="UP000008827">
    <property type="component" value="Unplaced"/>
</dbReference>
<dbReference type="GO" id="GO:0043662">
    <property type="term" value="C:peribacteroid fluid"/>
    <property type="evidence" value="ECO:0007669"/>
    <property type="project" value="UniProtKB-SubCell"/>
</dbReference>
<dbReference type="GO" id="GO:0043661">
    <property type="term" value="C:peribacteroid membrane"/>
    <property type="evidence" value="ECO:0007669"/>
    <property type="project" value="UniProtKB-SubCell"/>
</dbReference>
<dbReference type="GO" id="GO:0009877">
    <property type="term" value="P:nodulation"/>
    <property type="evidence" value="ECO:0007669"/>
    <property type="project" value="UniProtKB-KW"/>
</dbReference>
<dbReference type="InterPro" id="IPR003387">
    <property type="entry name" value="Nodulin"/>
</dbReference>
<dbReference type="Pfam" id="PF02451">
    <property type="entry name" value="Nodulin"/>
    <property type="match status" value="2"/>
</dbReference>
<evidence type="ECO:0000305" key="1"/>
<organism>
    <name type="scientific">Glycine max</name>
    <name type="common">Soybean</name>
    <name type="synonym">Glycine hispida</name>
    <dbReference type="NCBI Taxonomy" id="3847"/>
    <lineage>
        <taxon>Eukaryota</taxon>
        <taxon>Viridiplantae</taxon>
        <taxon>Streptophyta</taxon>
        <taxon>Embryophyta</taxon>
        <taxon>Tracheophyta</taxon>
        <taxon>Spermatophyta</taxon>
        <taxon>Magnoliopsida</taxon>
        <taxon>eudicotyledons</taxon>
        <taxon>Gunneridae</taxon>
        <taxon>Pentapetalae</taxon>
        <taxon>rosids</taxon>
        <taxon>fabids</taxon>
        <taxon>Fabales</taxon>
        <taxon>Fabaceae</taxon>
        <taxon>Papilionoideae</taxon>
        <taxon>50 kb inversion clade</taxon>
        <taxon>NPAAA clade</taxon>
        <taxon>indigoferoid/millettioid clade</taxon>
        <taxon>Phaseoleae</taxon>
        <taxon>Glycine</taxon>
        <taxon>Glycine subgen. Soja</taxon>
    </lineage>
</organism>
<comment type="subcellular location">
    <subcellularLocation>
        <location evidence="1">Symbiosome</location>
        <location evidence="1">Peribacteroid membrane</location>
    </subcellularLocation>
    <subcellularLocation>
        <location evidence="1">Symbiosome</location>
        <location evidence="1">Peribacteroid space</location>
    </subcellularLocation>
</comment>
<comment type="induction">
    <text>During nodulation in legume roots after Rhizobium infection.</text>
</comment>
<comment type="similarity">
    <text evidence="1">Belongs to the nodulin 20 family.</text>
</comment>
<reference key="1">
    <citation type="journal article" date="1987" name="Nucleic Acids Res.">
        <title>A small family of nodule specific genes from soybean.</title>
        <authorList>
            <person name="Sandal N.N."/>
            <person name="Bojsen K."/>
            <person name="Marcker K.A."/>
        </authorList>
    </citation>
    <scope>NUCLEOTIDE SEQUENCE [GENOMIC DNA]</scope>
</reference>
<reference key="2">
    <citation type="journal article" date="1991" name="Mol. Gen. Genet.">
        <title>Characterization and genomic organization of a highly expressed late nodulin gene subfamily in soybeans.</title>
        <authorList>
            <person name="Richter H.E."/>
            <person name="Sandal N.N."/>
            <person name="Marcker K.A."/>
            <person name="Sengupta-Gopalan C."/>
        </authorList>
    </citation>
    <scope>NUCLEOTIDE SEQUENCE [GENOMIC DNA]</scope>
    <source>
        <strain>cv. Dare</strain>
        <tissue>Leaf</tissue>
    </source>
</reference>
<sequence length="185" mass="20022">MRVVLITLFLFIGAAVAEDAGIDAITPEEGKANNIIEAYESPRFQKFVTHCSSHVTQTCSGNDPLNNQEASRMNSPFGLSFCLFDSMEKCLADHKASLKDPQDNNNLASMSSLPGSIQNQPLLIETVKFRAVLKTCSHVSARYCFTNPNVATSALADCLMPSLTHCVYPSSSILLPPPPPPPPLI</sequence>
<keyword id="KW-0472">Membrane</keyword>
<keyword id="KW-0536">Nodulation</keyword>
<keyword id="KW-1185">Reference proteome</keyword>
<keyword id="KW-0732">Signal</keyword>